<keyword id="KW-0444">Lipid biosynthesis</keyword>
<keyword id="KW-0443">Lipid metabolism</keyword>
<keyword id="KW-0560">Oxidoreductase</keyword>
<keyword id="KW-1185">Reference proteome</keyword>
<evidence type="ECO:0000269" key="1">
    <source>
    </source>
</evidence>
<evidence type="ECO:0000305" key="2"/>
<sequence>MGGLRFGFVDALVHSRLPPTLPARSSMAAATVMGADSYWVGDHLNALVPRSIATSEYLGIAAKFVPKIDANYEPWTMLGNLAFGLPSRLRLGVCVTDAGRRNPAVTAQAAATLHLLTRGRAILGIGVGEREGNEPYGVEWTKPVARFEEALATIRALWNSNGELISRESPYFPLHNALFDLPPYRGKWPEIWVAAHGPRMLRATGRYADAWIPIVVVRPSDYSRALEAVRSAASDAGRDPMSITPAAVRGIITGRNRDDVEEALESVVVKMTALGVPGEAWARHGVEHPMGADFSGVQDIIPQTMDKQTVLSYAAKVPAALMKEVVFSGTPDEVIDQVAEWRDHGLRYVVLINGSLVNPSLRKTVTAVLPHAKVLRGLKKL</sequence>
<name>PHKR_MYCTU</name>
<protein>
    <recommendedName>
        <fullName>Phthiodiolone/phenolphthiodiolone dimycocerosates ketoreductase</fullName>
        <ecNumber>1.2.-.-</ecNumber>
    </recommendedName>
</protein>
<gene>
    <name type="ordered locus">Rv2951c</name>
</gene>
<comment type="function">
    <text evidence="1">Catalyzes the reduction of the keto moiety of phthiodiolone dimycocerosates (DIM B) and glycosylated phenolphthiodiolone dimycocerosates to form the intermediate compounds phthiotriol and glycosylated phenolphthiotriol dimycocerosates during phthiocerol dimycocerosates (DIM A) and glycosylated phenolphthiocerol dimycocerosates (PGL) biosynthesis.</text>
</comment>
<comment type="similarity">
    <text evidence="2">Belongs to the mer family. Phthiodiolone/phenolphthiodiolone dimycocerosates ketoreductase subfamily.</text>
</comment>
<comment type="sequence caution" evidence="2">
    <conflict type="frameshift">
        <sequence resource="EMBL-CDS" id="AAA50933"/>
    </conflict>
</comment>
<organism>
    <name type="scientific">Mycobacterium tuberculosis (strain ATCC 25618 / H37Rv)</name>
    <dbReference type="NCBI Taxonomy" id="83332"/>
    <lineage>
        <taxon>Bacteria</taxon>
        <taxon>Bacillati</taxon>
        <taxon>Actinomycetota</taxon>
        <taxon>Actinomycetes</taxon>
        <taxon>Mycobacteriales</taxon>
        <taxon>Mycobacteriaceae</taxon>
        <taxon>Mycobacterium</taxon>
        <taxon>Mycobacterium tuberculosis complex</taxon>
    </lineage>
</organism>
<dbReference type="EC" id="1.2.-.-"/>
<dbReference type="EMBL" id="U00024">
    <property type="protein sequence ID" value="AAA50933.1"/>
    <property type="status" value="ALT_FRAME"/>
    <property type="molecule type" value="Genomic_DNA"/>
</dbReference>
<dbReference type="EMBL" id="AL123456">
    <property type="protein sequence ID" value="CCP45755.1"/>
    <property type="molecule type" value="Genomic_DNA"/>
</dbReference>
<dbReference type="PIR" id="D70669">
    <property type="entry name" value="D70669"/>
</dbReference>
<dbReference type="RefSeq" id="NP_217467.1">
    <property type="nucleotide sequence ID" value="NC_000962.3"/>
</dbReference>
<dbReference type="RefSeq" id="WP_003414891.1">
    <property type="nucleotide sequence ID" value="NZ_NVQJ01000015.1"/>
</dbReference>
<dbReference type="SMR" id="P9WIB7"/>
<dbReference type="STRING" id="83332.Rv2951c"/>
<dbReference type="PaxDb" id="83332-Rv2951c"/>
<dbReference type="DNASU" id="887887"/>
<dbReference type="GeneID" id="887887"/>
<dbReference type="KEGG" id="mtu:Rv2951c"/>
<dbReference type="KEGG" id="mtv:RVBD_2951c"/>
<dbReference type="TubercuList" id="Rv2951c"/>
<dbReference type="eggNOG" id="COG2141">
    <property type="taxonomic scope" value="Bacteria"/>
</dbReference>
<dbReference type="InParanoid" id="P9WIB7"/>
<dbReference type="OrthoDB" id="9775082at2"/>
<dbReference type="PhylomeDB" id="P9WIB7"/>
<dbReference type="BioCyc" id="MetaCyc:G185E-7205-MONOMER"/>
<dbReference type="Proteomes" id="UP000001584">
    <property type="component" value="Chromosome"/>
</dbReference>
<dbReference type="GO" id="GO:0005829">
    <property type="term" value="C:cytosol"/>
    <property type="evidence" value="ECO:0007005"/>
    <property type="project" value="MTBBASE"/>
</dbReference>
<dbReference type="GO" id="GO:0005886">
    <property type="term" value="C:plasma membrane"/>
    <property type="evidence" value="ECO:0007005"/>
    <property type="project" value="MTBBASE"/>
</dbReference>
<dbReference type="GO" id="GO:0016705">
    <property type="term" value="F:oxidoreductase activity, acting on paired donors, with incorporation or reduction of molecular oxygen"/>
    <property type="evidence" value="ECO:0007669"/>
    <property type="project" value="InterPro"/>
</dbReference>
<dbReference type="GO" id="GO:0006629">
    <property type="term" value="P:lipid metabolic process"/>
    <property type="evidence" value="ECO:0007669"/>
    <property type="project" value="UniProtKB-KW"/>
</dbReference>
<dbReference type="CDD" id="cd01097">
    <property type="entry name" value="Tetrahydromethanopterin_reductase"/>
    <property type="match status" value="1"/>
</dbReference>
<dbReference type="FunFam" id="3.20.20.30:FF:000015">
    <property type="entry name" value="Phthiodiolone/phenolphthiodiolone dimycocerosates ketoreductase"/>
    <property type="match status" value="1"/>
</dbReference>
<dbReference type="Gene3D" id="3.20.20.30">
    <property type="entry name" value="Luciferase-like domain"/>
    <property type="match status" value="1"/>
</dbReference>
<dbReference type="InterPro" id="IPR050564">
    <property type="entry name" value="F420-G6PD/mer"/>
</dbReference>
<dbReference type="InterPro" id="IPR011251">
    <property type="entry name" value="Luciferase-like_dom"/>
</dbReference>
<dbReference type="InterPro" id="IPR036661">
    <property type="entry name" value="Luciferase-like_sf"/>
</dbReference>
<dbReference type="PANTHER" id="PTHR43244">
    <property type="match status" value="1"/>
</dbReference>
<dbReference type="PANTHER" id="PTHR43244:SF1">
    <property type="entry name" value="5,10-METHYLENETETRAHYDROMETHANOPTERIN REDUCTASE"/>
    <property type="match status" value="1"/>
</dbReference>
<dbReference type="Pfam" id="PF00296">
    <property type="entry name" value="Bac_luciferase"/>
    <property type="match status" value="1"/>
</dbReference>
<dbReference type="SUPFAM" id="SSF51679">
    <property type="entry name" value="Bacterial luciferase-like"/>
    <property type="match status" value="1"/>
</dbReference>
<reference key="1">
    <citation type="submission" date="1994-09" db="EMBL/GenBank/DDBJ databases">
        <authorList>
            <person name="Smith D.R."/>
            <person name="Robison K."/>
        </authorList>
    </citation>
    <scope>NUCLEOTIDE SEQUENCE [GENOMIC DNA]</scope>
</reference>
<reference key="2">
    <citation type="journal article" date="1998" name="Nature">
        <title>Deciphering the biology of Mycobacterium tuberculosis from the complete genome sequence.</title>
        <authorList>
            <person name="Cole S.T."/>
            <person name="Brosch R."/>
            <person name="Parkhill J."/>
            <person name="Garnier T."/>
            <person name="Churcher C.M."/>
            <person name="Harris D.E."/>
            <person name="Gordon S.V."/>
            <person name="Eiglmeier K."/>
            <person name="Gas S."/>
            <person name="Barry C.E. III"/>
            <person name="Tekaia F."/>
            <person name="Badcock K."/>
            <person name="Basham D."/>
            <person name="Brown D."/>
            <person name="Chillingworth T."/>
            <person name="Connor R."/>
            <person name="Davies R.M."/>
            <person name="Devlin K."/>
            <person name="Feltwell T."/>
            <person name="Gentles S."/>
            <person name="Hamlin N."/>
            <person name="Holroyd S."/>
            <person name="Hornsby T."/>
            <person name="Jagels K."/>
            <person name="Krogh A."/>
            <person name="McLean J."/>
            <person name="Moule S."/>
            <person name="Murphy L.D."/>
            <person name="Oliver S."/>
            <person name="Osborne J."/>
            <person name="Quail M.A."/>
            <person name="Rajandream M.A."/>
            <person name="Rogers J."/>
            <person name="Rutter S."/>
            <person name="Seeger K."/>
            <person name="Skelton S."/>
            <person name="Squares S."/>
            <person name="Squares R."/>
            <person name="Sulston J.E."/>
            <person name="Taylor K."/>
            <person name="Whitehead S."/>
            <person name="Barrell B.G."/>
        </authorList>
    </citation>
    <scope>NUCLEOTIDE SEQUENCE [LARGE SCALE GENOMIC DNA]</scope>
    <source>
        <strain>ATCC 25618 / H37Rv</strain>
    </source>
</reference>
<reference key="3">
    <citation type="journal article" date="2007" name="FEBS J.">
        <title>Molecular dissection of the biosynthetic relationship between phthiocerol and phthiodiolone dimycocerosates and their critical role in the virulence and permeability of Mycobacterium tuberculosis.</title>
        <authorList>
            <person name="Simeone R."/>
            <person name="Constant P."/>
            <person name="Malaga W."/>
            <person name="Guilhot C."/>
            <person name="Daffe M."/>
            <person name="Chalut C."/>
        </authorList>
    </citation>
    <scope>FUNCTION AS A KETOREDUCTASE</scope>
    <source>
        <strain>ATCC 25618 / H37Rv</strain>
    </source>
</reference>
<reference key="4">
    <citation type="journal article" date="2011" name="Mol. Cell. Proteomics">
        <title>Proteogenomic analysis of Mycobacterium tuberculosis by high resolution mass spectrometry.</title>
        <authorList>
            <person name="Kelkar D.S."/>
            <person name="Kumar D."/>
            <person name="Kumar P."/>
            <person name="Balakrishnan L."/>
            <person name="Muthusamy B."/>
            <person name="Yadav A.K."/>
            <person name="Shrivastava P."/>
            <person name="Marimuthu A."/>
            <person name="Anand S."/>
            <person name="Sundaram H."/>
            <person name="Kingsbury R."/>
            <person name="Harsha H.C."/>
            <person name="Nair B."/>
            <person name="Prasad T.S."/>
            <person name="Chauhan D.S."/>
            <person name="Katoch K."/>
            <person name="Katoch V.M."/>
            <person name="Kumar P."/>
            <person name="Chaerkady R."/>
            <person name="Ramachandran S."/>
            <person name="Dash D."/>
            <person name="Pandey A."/>
        </authorList>
    </citation>
    <scope>IDENTIFICATION BY MASS SPECTROMETRY [LARGE SCALE ANALYSIS]</scope>
    <source>
        <strain>ATCC 25618 / H37Rv</strain>
    </source>
</reference>
<accession>P9WIB7</accession>
<accession>L0TB46</accession>
<accession>P95140</accession>
<accession>Q50465</accession>
<accession>Q7D6D6</accession>
<proteinExistence type="evidence at protein level"/>
<feature type="chain" id="PRO_0000309352" description="Phthiodiolone/phenolphthiodiolone dimycocerosates ketoreductase">
    <location>
        <begin position="1"/>
        <end position="381"/>
    </location>
</feature>
<feature type="sequence conflict" description="In Ref. 1; AAA50933." evidence="2" ref="1">
    <location>
        <begin position="195"/>
        <end position="196"/>
    </location>
</feature>